<gene>
    <name evidence="1" type="primary">pgk</name>
    <name type="ordered locus">MUL_1829</name>
</gene>
<evidence type="ECO:0000255" key="1">
    <source>
        <dbReference type="HAMAP-Rule" id="MF_00145"/>
    </source>
</evidence>
<proteinExistence type="inferred from homology"/>
<accession>A0PPN3</accession>
<reference key="1">
    <citation type="journal article" date="2007" name="Genome Res.">
        <title>Reductive evolution and niche adaptation inferred from the genome of Mycobacterium ulcerans, the causative agent of Buruli ulcer.</title>
        <authorList>
            <person name="Stinear T.P."/>
            <person name="Seemann T."/>
            <person name="Pidot S."/>
            <person name="Frigui W."/>
            <person name="Reysset G."/>
            <person name="Garnier T."/>
            <person name="Meurice G."/>
            <person name="Simon D."/>
            <person name="Bouchier C."/>
            <person name="Ma L."/>
            <person name="Tichit M."/>
            <person name="Porter J.L."/>
            <person name="Ryan J."/>
            <person name="Johnson P.D.R."/>
            <person name="Davies J.K."/>
            <person name="Jenkin G.A."/>
            <person name="Small P.L.C."/>
            <person name="Jones L.M."/>
            <person name="Tekaia F."/>
            <person name="Laval F."/>
            <person name="Daffe M."/>
            <person name="Parkhill J."/>
            <person name="Cole S.T."/>
        </authorList>
    </citation>
    <scope>NUCLEOTIDE SEQUENCE [LARGE SCALE GENOMIC DNA]</scope>
    <source>
        <strain>Agy99</strain>
    </source>
</reference>
<sequence length="416" mass="43031">MTIHSLEDLPAEGVSGRGVLVRSDLNVPLDENGVITDAGRITASVPTLKALLDGGAKVVVAAHLGRPKDGPDPKLSLEPVAAALGEQLGRHVQLAGDIVGTDALARAEGLTDGDVLLLENIRFDKRETSKDDGERLAFAKQLAELVSPEGAFVSDGFGVVHRKQASVYDVATLLPHYAGRLVADEIRVLEQLTSSTERPYAVVLGGSKVSDKLGVIESLATKADSIVIGGGMCFTFLAAQGYSVGTSLLEKEMIDTCRRLLDTYHDVLRLPVDVVVTEKFAADPPPQTVAADAIPADTMGLDIGPGSVKRFAALLSNAKTIFWNGPMGVFEFPAYATGTRGIAEAIVAATGKGAFSVVGGGDSAAAVRALGISEGSFSHISTGGGASLEYLEGKTLPGIEVLGRPQPGQTEGGGPA</sequence>
<name>PGK_MYCUA</name>
<protein>
    <recommendedName>
        <fullName evidence="1">Phosphoglycerate kinase</fullName>
        <ecNumber evidence="1">2.7.2.3</ecNumber>
    </recommendedName>
</protein>
<keyword id="KW-0067">ATP-binding</keyword>
<keyword id="KW-0963">Cytoplasm</keyword>
<keyword id="KW-0324">Glycolysis</keyword>
<keyword id="KW-0418">Kinase</keyword>
<keyword id="KW-0547">Nucleotide-binding</keyword>
<keyword id="KW-0808">Transferase</keyword>
<feature type="chain" id="PRO_1000009636" description="Phosphoglycerate kinase">
    <location>
        <begin position="1"/>
        <end position="416"/>
    </location>
</feature>
<feature type="binding site" evidence="1">
    <location>
        <begin position="24"/>
        <end position="26"/>
    </location>
    <ligand>
        <name>substrate</name>
    </ligand>
</feature>
<feature type="binding site" evidence="1">
    <location>
        <position position="40"/>
    </location>
    <ligand>
        <name>substrate</name>
    </ligand>
</feature>
<feature type="binding site" evidence="1">
    <location>
        <begin position="63"/>
        <end position="66"/>
    </location>
    <ligand>
        <name>substrate</name>
    </ligand>
</feature>
<feature type="binding site" evidence="1">
    <location>
        <position position="122"/>
    </location>
    <ligand>
        <name>substrate</name>
    </ligand>
</feature>
<feature type="binding site" evidence="1">
    <location>
        <position position="162"/>
    </location>
    <ligand>
        <name>substrate</name>
    </ligand>
</feature>
<feature type="binding site" evidence="1">
    <location>
        <position position="212"/>
    </location>
    <ligand>
        <name>ATP</name>
        <dbReference type="ChEBI" id="CHEBI:30616"/>
    </ligand>
</feature>
<feature type="binding site" evidence="1">
    <location>
        <position position="300"/>
    </location>
    <ligand>
        <name>ATP</name>
        <dbReference type="ChEBI" id="CHEBI:30616"/>
    </ligand>
</feature>
<feature type="binding site" evidence="1">
    <location>
        <position position="331"/>
    </location>
    <ligand>
        <name>ATP</name>
        <dbReference type="ChEBI" id="CHEBI:30616"/>
    </ligand>
</feature>
<feature type="binding site" evidence="1">
    <location>
        <begin position="360"/>
        <end position="363"/>
    </location>
    <ligand>
        <name>ATP</name>
        <dbReference type="ChEBI" id="CHEBI:30616"/>
    </ligand>
</feature>
<dbReference type="EC" id="2.7.2.3" evidence="1"/>
<dbReference type="EMBL" id="CP000325">
    <property type="protein sequence ID" value="ABL04302.1"/>
    <property type="molecule type" value="Genomic_DNA"/>
</dbReference>
<dbReference type="RefSeq" id="WP_011739922.1">
    <property type="nucleotide sequence ID" value="NC_008611.1"/>
</dbReference>
<dbReference type="SMR" id="A0PPN3"/>
<dbReference type="KEGG" id="mul:MUL_1829"/>
<dbReference type="eggNOG" id="COG0126">
    <property type="taxonomic scope" value="Bacteria"/>
</dbReference>
<dbReference type="HOGENOM" id="CLU_025427_0_2_11"/>
<dbReference type="UniPathway" id="UPA00109">
    <property type="reaction ID" value="UER00185"/>
</dbReference>
<dbReference type="Proteomes" id="UP000000765">
    <property type="component" value="Chromosome"/>
</dbReference>
<dbReference type="GO" id="GO:0005829">
    <property type="term" value="C:cytosol"/>
    <property type="evidence" value="ECO:0007669"/>
    <property type="project" value="TreeGrafter"/>
</dbReference>
<dbReference type="GO" id="GO:0043531">
    <property type="term" value="F:ADP binding"/>
    <property type="evidence" value="ECO:0007669"/>
    <property type="project" value="TreeGrafter"/>
</dbReference>
<dbReference type="GO" id="GO:0005524">
    <property type="term" value="F:ATP binding"/>
    <property type="evidence" value="ECO:0007669"/>
    <property type="project" value="UniProtKB-KW"/>
</dbReference>
<dbReference type="GO" id="GO:0004618">
    <property type="term" value="F:phosphoglycerate kinase activity"/>
    <property type="evidence" value="ECO:0007669"/>
    <property type="project" value="UniProtKB-UniRule"/>
</dbReference>
<dbReference type="GO" id="GO:0006094">
    <property type="term" value="P:gluconeogenesis"/>
    <property type="evidence" value="ECO:0007669"/>
    <property type="project" value="TreeGrafter"/>
</dbReference>
<dbReference type="GO" id="GO:0006096">
    <property type="term" value="P:glycolytic process"/>
    <property type="evidence" value="ECO:0007669"/>
    <property type="project" value="UniProtKB-UniRule"/>
</dbReference>
<dbReference type="CDD" id="cd00318">
    <property type="entry name" value="Phosphoglycerate_kinase"/>
    <property type="match status" value="1"/>
</dbReference>
<dbReference type="FunFam" id="3.40.50.1260:FF:000006">
    <property type="entry name" value="Phosphoglycerate kinase"/>
    <property type="match status" value="1"/>
</dbReference>
<dbReference type="FunFam" id="3.40.50.1260:FF:000031">
    <property type="entry name" value="Phosphoglycerate kinase 1"/>
    <property type="match status" value="1"/>
</dbReference>
<dbReference type="Gene3D" id="3.40.50.1260">
    <property type="entry name" value="Phosphoglycerate kinase, N-terminal domain"/>
    <property type="match status" value="2"/>
</dbReference>
<dbReference type="HAMAP" id="MF_00145">
    <property type="entry name" value="Phosphoglyc_kinase"/>
    <property type="match status" value="1"/>
</dbReference>
<dbReference type="InterPro" id="IPR001576">
    <property type="entry name" value="Phosphoglycerate_kinase"/>
</dbReference>
<dbReference type="InterPro" id="IPR015911">
    <property type="entry name" value="Phosphoglycerate_kinase_CS"/>
</dbReference>
<dbReference type="InterPro" id="IPR015824">
    <property type="entry name" value="Phosphoglycerate_kinase_N"/>
</dbReference>
<dbReference type="InterPro" id="IPR036043">
    <property type="entry name" value="Phosphoglycerate_kinase_sf"/>
</dbReference>
<dbReference type="PANTHER" id="PTHR11406">
    <property type="entry name" value="PHOSPHOGLYCERATE KINASE"/>
    <property type="match status" value="1"/>
</dbReference>
<dbReference type="PANTHER" id="PTHR11406:SF23">
    <property type="entry name" value="PHOSPHOGLYCERATE KINASE 1, CHLOROPLASTIC-RELATED"/>
    <property type="match status" value="1"/>
</dbReference>
<dbReference type="Pfam" id="PF00162">
    <property type="entry name" value="PGK"/>
    <property type="match status" value="1"/>
</dbReference>
<dbReference type="PIRSF" id="PIRSF000724">
    <property type="entry name" value="Pgk"/>
    <property type="match status" value="1"/>
</dbReference>
<dbReference type="PRINTS" id="PR00477">
    <property type="entry name" value="PHGLYCKINASE"/>
</dbReference>
<dbReference type="SUPFAM" id="SSF53748">
    <property type="entry name" value="Phosphoglycerate kinase"/>
    <property type="match status" value="1"/>
</dbReference>
<dbReference type="PROSITE" id="PS00111">
    <property type="entry name" value="PGLYCERATE_KINASE"/>
    <property type="match status" value="1"/>
</dbReference>
<comment type="catalytic activity">
    <reaction evidence="1">
        <text>(2R)-3-phosphoglycerate + ATP = (2R)-3-phospho-glyceroyl phosphate + ADP</text>
        <dbReference type="Rhea" id="RHEA:14801"/>
        <dbReference type="ChEBI" id="CHEBI:30616"/>
        <dbReference type="ChEBI" id="CHEBI:57604"/>
        <dbReference type="ChEBI" id="CHEBI:58272"/>
        <dbReference type="ChEBI" id="CHEBI:456216"/>
        <dbReference type="EC" id="2.7.2.3"/>
    </reaction>
</comment>
<comment type="pathway">
    <text evidence="1">Carbohydrate degradation; glycolysis; pyruvate from D-glyceraldehyde 3-phosphate: step 2/5.</text>
</comment>
<comment type="subunit">
    <text evidence="1">Monomer.</text>
</comment>
<comment type="subcellular location">
    <subcellularLocation>
        <location evidence="1">Cytoplasm</location>
    </subcellularLocation>
</comment>
<comment type="similarity">
    <text evidence="1">Belongs to the phosphoglycerate kinase family.</text>
</comment>
<organism>
    <name type="scientific">Mycobacterium ulcerans (strain Agy99)</name>
    <dbReference type="NCBI Taxonomy" id="362242"/>
    <lineage>
        <taxon>Bacteria</taxon>
        <taxon>Bacillati</taxon>
        <taxon>Actinomycetota</taxon>
        <taxon>Actinomycetes</taxon>
        <taxon>Mycobacteriales</taxon>
        <taxon>Mycobacteriaceae</taxon>
        <taxon>Mycobacterium</taxon>
        <taxon>Mycobacterium ulcerans group</taxon>
    </lineage>
</organism>